<comment type="catalytic activity">
    <reaction evidence="1">
        <text>(S)-4-amino-5-oxopentanoate = 5-aminolevulinate</text>
        <dbReference type="Rhea" id="RHEA:14265"/>
        <dbReference type="ChEBI" id="CHEBI:57501"/>
        <dbReference type="ChEBI" id="CHEBI:356416"/>
        <dbReference type="EC" id="5.4.3.8"/>
    </reaction>
</comment>
<comment type="cofactor">
    <cofactor evidence="1">
        <name>pyridoxal 5'-phosphate</name>
        <dbReference type="ChEBI" id="CHEBI:597326"/>
    </cofactor>
</comment>
<comment type="pathway">
    <text evidence="1">Porphyrin-containing compound metabolism; protoporphyrin-IX biosynthesis; 5-aminolevulinate from L-glutamyl-tRNA(Glu): step 2/2.</text>
</comment>
<comment type="subcellular location">
    <subcellularLocation>
        <location evidence="1">Cytoplasm</location>
    </subcellularLocation>
</comment>
<comment type="similarity">
    <text evidence="1">Belongs to the class-III pyridoxal-phosphate-dependent aminotransferase family. HemL subfamily.</text>
</comment>
<organism>
    <name type="scientific">Saccharolobus islandicus (strain M.16.4 / Kamchatka #3)</name>
    <name type="common">Sulfolobus islandicus</name>
    <dbReference type="NCBI Taxonomy" id="426118"/>
    <lineage>
        <taxon>Archaea</taxon>
        <taxon>Thermoproteota</taxon>
        <taxon>Thermoprotei</taxon>
        <taxon>Sulfolobales</taxon>
        <taxon>Sulfolobaceae</taxon>
        <taxon>Saccharolobus</taxon>
    </lineage>
</organism>
<keyword id="KW-0963">Cytoplasm</keyword>
<keyword id="KW-0413">Isomerase</keyword>
<keyword id="KW-0627">Porphyrin biosynthesis</keyword>
<keyword id="KW-0663">Pyridoxal phosphate</keyword>
<dbReference type="EC" id="5.4.3.8" evidence="1"/>
<dbReference type="EMBL" id="CP001402">
    <property type="protein sequence ID" value="ACR42564.1"/>
    <property type="molecule type" value="Genomic_DNA"/>
</dbReference>
<dbReference type="RefSeq" id="WP_012714102.1">
    <property type="nucleotide sequence ID" value="NC_012726.1"/>
</dbReference>
<dbReference type="SMR" id="C4KJ00"/>
<dbReference type="GeneID" id="84062267"/>
<dbReference type="KEGG" id="sid:M164_1961"/>
<dbReference type="HOGENOM" id="CLU_016922_1_5_2"/>
<dbReference type="UniPathway" id="UPA00251">
    <property type="reaction ID" value="UER00317"/>
</dbReference>
<dbReference type="Proteomes" id="UP000001479">
    <property type="component" value="Chromosome"/>
</dbReference>
<dbReference type="GO" id="GO:0005737">
    <property type="term" value="C:cytoplasm"/>
    <property type="evidence" value="ECO:0007669"/>
    <property type="project" value="UniProtKB-SubCell"/>
</dbReference>
<dbReference type="GO" id="GO:0042286">
    <property type="term" value="F:glutamate-1-semialdehyde 2,1-aminomutase activity"/>
    <property type="evidence" value="ECO:0007669"/>
    <property type="project" value="UniProtKB-UniRule"/>
</dbReference>
<dbReference type="GO" id="GO:0030170">
    <property type="term" value="F:pyridoxal phosphate binding"/>
    <property type="evidence" value="ECO:0007669"/>
    <property type="project" value="InterPro"/>
</dbReference>
<dbReference type="GO" id="GO:0008483">
    <property type="term" value="F:transaminase activity"/>
    <property type="evidence" value="ECO:0007669"/>
    <property type="project" value="InterPro"/>
</dbReference>
<dbReference type="GO" id="GO:0006782">
    <property type="term" value="P:protoporphyrinogen IX biosynthetic process"/>
    <property type="evidence" value="ECO:0007669"/>
    <property type="project" value="UniProtKB-UniRule"/>
</dbReference>
<dbReference type="CDD" id="cd00610">
    <property type="entry name" value="OAT_like"/>
    <property type="match status" value="1"/>
</dbReference>
<dbReference type="FunFam" id="3.40.640.10:FF:000021">
    <property type="entry name" value="Glutamate-1-semialdehyde 2,1-aminomutase"/>
    <property type="match status" value="1"/>
</dbReference>
<dbReference type="Gene3D" id="3.90.1150.10">
    <property type="entry name" value="Aspartate Aminotransferase, domain 1"/>
    <property type="match status" value="1"/>
</dbReference>
<dbReference type="Gene3D" id="3.40.640.10">
    <property type="entry name" value="Type I PLP-dependent aspartate aminotransferase-like (Major domain)"/>
    <property type="match status" value="1"/>
</dbReference>
<dbReference type="HAMAP" id="MF_00375">
    <property type="entry name" value="HemL_aminotrans_3"/>
    <property type="match status" value="1"/>
</dbReference>
<dbReference type="InterPro" id="IPR004639">
    <property type="entry name" value="4pyrrol_synth_GluAld_NH2Trfase"/>
</dbReference>
<dbReference type="InterPro" id="IPR005814">
    <property type="entry name" value="Aminotrans_3"/>
</dbReference>
<dbReference type="InterPro" id="IPR049704">
    <property type="entry name" value="Aminotrans_3_PPA_site"/>
</dbReference>
<dbReference type="InterPro" id="IPR015424">
    <property type="entry name" value="PyrdxlP-dep_Trfase"/>
</dbReference>
<dbReference type="InterPro" id="IPR015421">
    <property type="entry name" value="PyrdxlP-dep_Trfase_major"/>
</dbReference>
<dbReference type="InterPro" id="IPR015422">
    <property type="entry name" value="PyrdxlP-dep_Trfase_small"/>
</dbReference>
<dbReference type="NCBIfam" id="TIGR00713">
    <property type="entry name" value="hemL"/>
    <property type="match status" value="1"/>
</dbReference>
<dbReference type="NCBIfam" id="NF000818">
    <property type="entry name" value="PRK00062.1"/>
    <property type="match status" value="1"/>
</dbReference>
<dbReference type="PANTHER" id="PTHR43713">
    <property type="entry name" value="GLUTAMATE-1-SEMIALDEHYDE 2,1-AMINOMUTASE"/>
    <property type="match status" value="1"/>
</dbReference>
<dbReference type="PANTHER" id="PTHR43713:SF3">
    <property type="entry name" value="GLUTAMATE-1-SEMIALDEHYDE 2,1-AMINOMUTASE 1, CHLOROPLASTIC-RELATED"/>
    <property type="match status" value="1"/>
</dbReference>
<dbReference type="Pfam" id="PF00202">
    <property type="entry name" value="Aminotran_3"/>
    <property type="match status" value="1"/>
</dbReference>
<dbReference type="SUPFAM" id="SSF53383">
    <property type="entry name" value="PLP-dependent transferases"/>
    <property type="match status" value="1"/>
</dbReference>
<dbReference type="PROSITE" id="PS00600">
    <property type="entry name" value="AA_TRANSFER_CLASS_3"/>
    <property type="match status" value="1"/>
</dbReference>
<gene>
    <name evidence="1" type="primary">hemL</name>
    <name type="ordered locus">M164_1961</name>
</gene>
<feature type="chain" id="PRO_0000382416" description="Glutamate-1-semialdehyde 2,1-aminomutase">
    <location>
        <begin position="1"/>
        <end position="426"/>
    </location>
</feature>
<feature type="modified residue" description="N6-(pyridoxal phosphate)lysine" evidence="1">
    <location>
        <position position="268"/>
    </location>
</feature>
<name>GSA_SACI6</name>
<proteinExistence type="inferred from homology"/>
<accession>C4KJ00</accession>
<reference key="1">
    <citation type="journal article" date="2009" name="Proc. Natl. Acad. Sci. U.S.A.">
        <title>Biogeography of the Sulfolobus islandicus pan-genome.</title>
        <authorList>
            <person name="Reno M.L."/>
            <person name="Held N.L."/>
            <person name="Fields C.J."/>
            <person name="Burke P.V."/>
            <person name="Whitaker R.J."/>
        </authorList>
    </citation>
    <scope>NUCLEOTIDE SEQUENCE [LARGE SCALE GENOMIC DNA]</scope>
    <source>
        <strain>M.16.4 / Kamchatka #3</strain>
    </source>
</reference>
<protein>
    <recommendedName>
        <fullName evidence="1">Glutamate-1-semialdehyde 2,1-aminomutase</fullName>
        <shortName evidence="1">GSA</shortName>
        <ecNumber evidence="1">5.4.3.8</ecNumber>
    </recommendedName>
    <alternativeName>
        <fullName evidence="1">Glutamate-1-semialdehyde aminotransferase</fullName>
        <shortName evidence="1">GSA-AT</shortName>
    </alternativeName>
</protein>
<sequence>MDKGRCTILNSEELWAQARQLFAGGVNSPVRAAVKPFPFYVERGKGAYIYTVEGNKFIDYVLGYGPLILGHSPESVKRKIIEQLEKGWLFGTPSKLEIELAKKISSHIPSAQKIRFVNSGTEATMAAIRLARGYSKRSKILKFSGNYHGAHDYTLVEAGSAATEYNVTTSDGIPMEIMKTVEICEFNDLDCVDKKLRNEDIAAALLEPIMGNAGVILPEKGFLSGLRELTKSYNSLLIFDEVITGFRIDIGGAQSYYQIYPDITTLGKIIGGGFPIGAVAGKAEIIDNFTPAGRVFNAGTFNANPISMIAGIATIEELEKEYPYNIANKASKTLVEELERLLKIKHTINHIGSMFQVFFGIDKVRNYSDAKRANKEYYIKFHERLLKERVFIPPSQYETIFTSAAHEDDVVNDTIDKLAKVIGELS</sequence>
<evidence type="ECO:0000255" key="1">
    <source>
        <dbReference type="HAMAP-Rule" id="MF_00375"/>
    </source>
</evidence>